<name>PRB1_TOBAC</name>
<accession>P11670</accession>
<proteinExistence type="inferred from homology"/>
<sequence>MGFLTTIVACFITFAILIHSSKAQNSPQDYLNPHNAARRQVGVGPMTWDNRLAAYAQNYANQRIGDCGMIHSHGPYGENLAAAFPQLNAAGAVKMWVDEKRFYDYNSNSCVGGVCGHYTQVVWRNSVRLGCARVRSNNGWFFITCNYDPPGNFIGQRPFGDLEEQPFDSKLELPTDV</sequence>
<dbReference type="EMBL" id="X14065">
    <property type="protein sequence ID" value="CAA32228.1"/>
    <property type="molecule type" value="Genomic_DNA"/>
</dbReference>
<dbReference type="PIR" id="S04728">
    <property type="entry name" value="S04728"/>
</dbReference>
<dbReference type="RefSeq" id="NP_001412816.1">
    <property type="nucleotide sequence ID" value="NM_001425887.1"/>
</dbReference>
<dbReference type="RefSeq" id="XP_016477771.1">
    <property type="nucleotide sequence ID" value="XM_016622285.1"/>
</dbReference>
<dbReference type="SMR" id="P11670"/>
<dbReference type="STRING" id="4097.P11670"/>
<dbReference type="TCDB" id="8.B.9.1.5">
    <property type="family name" value="the triflin toxin (triflin or crisp) family"/>
</dbReference>
<dbReference type="PaxDb" id="4097-P11670"/>
<dbReference type="GeneID" id="107799202"/>
<dbReference type="KEGG" id="nta:107799202"/>
<dbReference type="OMA" id="EHAMIAR"/>
<dbReference type="OrthoDB" id="337038at2759"/>
<dbReference type="PhylomeDB" id="P11670"/>
<dbReference type="Proteomes" id="UP000084051">
    <property type="component" value="Unplaced"/>
</dbReference>
<dbReference type="GO" id="GO:0005615">
    <property type="term" value="C:extracellular space"/>
    <property type="evidence" value="ECO:0000318"/>
    <property type="project" value="GO_Central"/>
</dbReference>
<dbReference type="GO" id="GO:0006952">
    <property type="term" value="P:defense response"/>
    <property type="evidence" value="ECO:0007669"/>
    <property type="project" value="UniProtKB-KW"/>
</dbReference>
<dbReference type="GO" id="GO:0019953">
    <property type="term" value="P:sexual reproduction"/>
    <property type="evidence" value="ECO:0000318"/>
    <property type="project" value="GO_Central"/>
</dbReference>
<dbReference type="CDD" id="cd05381">
    <property type="entry name" value="CAP_PR-1"/>
    <property type="match status" value="1"/>
</dbReference>
<dbReference type="FunFam" id="3.40.33.10:FF:000006">
    <property type="entry name" value="Putative pathogenesis-related protein 1"/>
    <property type="match status" value="1"/>
</dbReference>
<dbReference type="Gene3D" id="3.40.33.10">
    <property type="entry name" value="CAP"/>
    <property type="match status" value="1"/>
</dbReference>
<dbReference type="InterPro" id="IPR018244">
    <property type="entry name" value="Allrgn_V5/Tpx1_CS"/>
</dbReference>
<dbReference type="InterPro" id="IPR014044">
    <property type="entry name" value="CAP_dom"/>
</dbReference>
<dbReference type="InterPro" id="IPR035940">
    <property type="entry name" value="CAP_sf"/>
</dbReference>
<dbReference type="InterPro" id="IPR001283">
    <property type="entry name" value="CRISP-related"/>
</dbReference>
<dbReference type="InterPro" id="IPR002413">
    <property type="entry name" value="V5_allergen-like"/>
</dbReference>
<dbReference type="PANTHER" id="PTHR10334">
    <property type="entry name" value="CYSTEINE-RICH SECRETORY PROTEIN-RELATED"/>
    <property type="match status" value="1"/>
</dbReference>
<dbReference type="Pfam" id="PF00188">
    <property type="entry name" value="CAP"/>
    <property type="match status" value="1"/>
</dbReference>
<dbReference type="PRINTS" id="PR00838">
    <property type="entry name" value="V5ALLERGEN"/>
</dbReference>
<dbReference type="PRINTS" id="PR00837">
    <property type="entry name" value="V5TPXLIKE"/>
</dbReference>
<dbReference type="SMART" id="SM00198">
    <property type="entry name" value="SCP"/>
    <property type="match status" value="1"/>
</dbReference>
<dbReference type="SUPFAM" id="SSF55797">
    <property type="entry name" value="PR-1-like"/>
    <property type="match status" value="1"/>
</dbReference>
<dbReference type="PROSITE" id="PS01009">
    <property type="entry name" value="CRISP_1"/>
    <property type="match status" value="1"/>
</dbReference>
<dbReference type="PROSITE" id="PS01010">
    <property type="entry name" value="CRISP_2"/>
    <property type="match status" value="1"/>
</dbReference>
<comment type="function">
    <text>Probably involved in the defense reaction of plants against pathogens.</text>
</comment>
<comment type="PTM">
    <text evidence="1">Two disulfide bonds are present.</text>
</comment>
<comment type="similarity">
    <text evidence="2">Belongs to the CRISP family.</text>
</comment>
<feature type="signal peptide" evidence="1">
    <location>
        <begin position="1"/>
        <end position="23"/>
    </location>
</feature>
<feature type="chain" id="PRO_0000006303" description="Basic form of pathogenesis-related protein 1">
    <location>
        <begin position="24"/>
        <end position="177"/>
    </location>
</feature>
<feature type="domain" description="SCP">
    <location>
        <begin position="31"/>
        <end position="147"/>
    </location>
</feature>
<feature type="modified residue" description="Pyrrolidone carboxylic acid" evidence="1">
    <location>
        <position position="24"/>
    </location>
</feature>
<keyword id="KW-1015">Disulfide bond</keyword>
<keyword id="KW-0568">Pathogenesis-related protein</keyword>
<keyword id="KW-0611">Plant defense</keyword>
<keyword id="KW-0873">Pyrrolidone carboxylic acid</keyword>
<keyword id="KW-1185">Reference proteome</keyword>
<keyword id="KW-0732">Signal</keyword>
<reference key="1">
    <citation type="journal article" date="1989" name="Plant Mol. Biol.">
        <title>Isolation and sequence of a genomic clone encoding the basic form of pathogenesis related protein 1 from Nicotiana tabacum.</title>
        <authorList>
            <person name="Payne G."/>
            <person name="Middlesteadt W."/>
            <person name="Desai N."/>
            <person name="Williams S."/>
            <person name="Dincher S."/>
            <person name="Carnes M."/>
            <person name="Ryals J."/>
        </authorList>
    </citation>
    <scope>NUCLEOTIDE SEQUENCE [GENOMIC DNA]</scope>
    <source>
        <strain>cv. Xanthi</strain>
    </source>
</reference>
<organism>
    <name type="scientific">Nicotiana tabacum</name>
    <name type="common">Common tobacco</name>
    <dbReference type="NCBI Taxonomy" id="4097"/>
    <lineage>
        <taxon>Eukaryota</taxon>
        <taxon>Viridiplantae</taxon>
        <taxon>Streptophyta</taxon>
        <taxon>Embryophyta</taxon>
        <taxon>Tracheophyta</taxon>
        <taxon>Spermatophyta</taxon>
        <taxon>Magnoliopsida</taxon>
        <taxon>eudicotyledons</taxon>
        <taxon>Gunneridae</taxon>
        <taxon>Pentapetalae</taxon>
        <taxon>asterids</taxon>
        <taxon>lamiids</taxon>
        <taxon>Solanales</taxon>
        <taxon>Solanaceae</taxon>
        <taxon>Nicotianoideae</taxon>
        <taxon>Nicotianeae</taxon>
        <taxon>Nicotiana</taxon>
    </lineage>
</organism>
<protein>
    <recommendedName>
        <fullName>Basic form of pathogenesis-related protein 1</fullName>
        <shortName>PRP 1</shortName>
    </recommendedName>
</protein>
<evidence type="ECO:0000250" key="1"/>
<evidence type="ECO:0000305" key="2"/>